<name>MRAY_BRUC2</name>
<keyword id="KW-0131">Cell cycle</keyword>
<keyword id="KW-0132">Cell division</keyword>
<keyword id="KW-0997">Cell inner membrane</keyword>
<keyword id="KW-1003">Cell membrane</keyword>
<keyword id="KW-0133">Cell shape</keyword>
<keyword id="KW-0961">Cell wall biogenesis/degradation</keyword>
<keyword id="KW-0460">Magnesium</keyword>
<keyword id="KW-0472">Membrane</keyword>
<keyword id="KW-0479">Metal-binding</keyword>
<keyword id="KW-0573">Peptidoglycan synthesis</keyword>
<keyword id="KW-1185">Reference proteome</keyword>
<keyword id="KW-0808">Transferase</keyword>
<keyword id="KW-0812">Transmembrane</keyword>
<keyword id="KW-1133">Transmembrane helix</keyword>
<dbReference type="EC" id="2.7.8.13" evidence="1"/>
<dbReference type="EMBL" id="CP000872">
    <property type="protein sequence ID" value="ABX62498.1"/>
    <property type="molecule type" value="Genomic_DNA"/>
</dbReference>
<dbReference type="RefSeq" id="WP_002964542.1">
    <property type="nucleotide sequence ID" value="NC_010103.1"/>
</dbReference>
<dbReference type="SMR" id="A9M693"/>
<dbReference type="GeneID" id="93016268"/>
<dbReference type="KEGG" id="bcs:BCAN_A1467"/>
<dbReference type="HOGENOM" id="CLU_023982_0_0_5"/>
<dbReference type="PhylomeDB" id="A9M693"/>
<dbReference type="UniPathway" id="UPA00219"/>
<dbReference type="Proteomes" id="UP000001385">
    <property type="component" value="Chromosome I"/>
</dbReference>
<dbReference type="GO" id="GO:0005886">
    <property type="term" value="C:plasma membrane"/>
    <property type="evidence" value="ECO:0007669"/>
    <property type="project" value="UniProtKB-SubCell"/>
</dbReference>
<dbReference type="GO" id="GO:0046872">
    <property type="term" value="F:metal ion binding"/>
    <property type="evidence" value="ECO:0007669"/>
    <property type="project" value="UniProtKB-KW"/>
</dbReference>
<dbReference type="GO" id="GO:0008963">
    <property type="term" value="F:phospho-N-acetylmuramoyl-pentapeptide-transferase activity"/>
    <property type="evidence" value="ECO:0007669"/>
    <property type="project" value="UniProtKB-UniRule"/>
</dbReference>
<dbReference type="GO" id="GO:0051992">
    <property type="term" value="F:UDP-N-acetylmuramoyl-L-alanyl-D-glutamyl-meso-2,6-diaminopimelyl-D-alanyl-D-alanine:undecaprenyl-phosphate transferase activity"/>
    <property type="evidence" value="ECO:0007669"/>
    <property type="project" value="RHEA"/>
</dbReference>
<dbReference type="GO" id="GO:0051301">
    <property type="term" value="P:cell division"/>
    <property type="evidence" value="ECO:0007669"/>
    <property type="project" value="UniProtKB-KW"/>
</dbReference>
<dbReference type="GO" id="GO:0071555">
    <property type="term" value="P:cell wall organization"/>
    <property type="evidence" value="ECO:0007669"/>
    <property type="project" value="UniProtKB-KW"/>
</dbReference>
<dbReference type="GO" id="GO:0009252">
    <property type="term" value="P:peptidoglycan biosynthetic process"/>
    <property type="evidence" value="ECO:0007669"/>
    <property type="project" value="UniProtKB-UniRule"/>
</dbReference>
<dbReference type="GO" id="GO:0008360">
    <property type="term" value="P:regulation of cell shape"/>
    <property type="evidence" value="ECO:0007669"/>
    <property type="project" value="UniProtKB-KW"/>
</dbReference>
<dbReference type="CDD" id="cd06852">
    <property type="entry name" value="GT_MraY"/>
    <property type="match status" value="1"/>
</dbReference>
<dbReference type="HAMAP" id="MF_00038">
    <property type="entry name" value="MraY"/>
    <property type="match status" value="1"/>
</dbReference>
<dbReference type="InterPro" id="IPR000715">
    <property type="entry name" value="Glycosyl_transferase_4"/>
</dbReference>
<dbReference type="InterPro" id="IPR003524">
    <property type="entry name" value="PNAcMuramoyl-5peptid_Trfase"/>
</dbReference>
<dbReference type="InterPro" id="IPR018480">
    <property type="entry name" value="PNAcMuramoyl-5peptid_Trfase_CS"/>
</dbReference>
<dbReference type="NCBIfam" id="TIGR00445">
    <property type="entry name" value="mraY"/>
    <property type="match status" value="1"/>
</dbReference>
<dbReference type="PANTHER" id="PTHR22926">
    <property type="entry name" value="PHOSPHO-N-ACETYLMURAMOYL-PENTAPEPTIDE-TRANSFERASE"/>
    <property type="match status" value="1"/>
</dbReference>
<dbReference type="PANTHER" id="PTHR22926:SF5">
    <property type="entry name" value="PHOSPHO-N-ACETYLMURAMOYL-PENTAPEPTIDE-TRANSFERASE HOMOLOG"/>
    <property type="match status" value="1"/>
</dbReference>
<dbReference type="Pfam" id="PF00953">
    <property type="entry name" value="Glycos_transf_4"/>
    <property type="match status" value="1"/>
</dbReference>
<dbReference type="Pfam" id="PF10555">
    <property type="entry name" value="MraY_sig1"/>
    <property type="match status" value="1"/>
</dbReference>
<dbReference type="PROSITE" id="PS01347">
    <property type="entry name" value="MRAY_1"/>
    <property type="match status" value="1"/>
</dbReference>
<dbReference type="PROSITE" id="PS01348">
    <property type="entry name" value="MRAY_2"/>
    <property type="match status" value="1"/>
</dbReference>
<accession>A9M693</accession>
<evidence type="ECO:0000255" key="1">
    <source>
        <dbReference type="HAMAP-Rule" id="MF_00038"/>
    </source>
</evidence>
<gene>
    <name evidence="1" type="primary">mraY</name>
    <name type="ordered locus">BCAN_A1467</name>
</gene>
<reference key="1">
    <citation type="submission" date="2007-10" db="EMBL/GenBank/DDBJ databases">
        <title>Brucella canis ATCC 23365 whole genome shotgun sequencing project.</title>
        <authorList>
            <person name="Setubal J.C."/>
            <person name="Bowns C."/>
            <person name="Boyle S."/>
            <person name="Crasta O.R."/>
            <person name="Czar M.J."/>
            <person name="Dharmanolla C."/>
            <person name="Gillespie J.J."/>
            <person name="Kenyon R.W."/>
            <person name="Lu J."/>
            <person name="Mane S."/>
            <person name="Mohapatra S."/>
            <person name="Nagrani S."/>
            <person name="Purkayastha A."/>
            <person name="Rajasimha H.K."/>
            <person name="Shallom J.M."/>
            <person name="Shallom S."/>
            <person name="Shukla M."/>
            <person name="Snyder E.E."/>
            <person name="Sobral B.W."/>
            <person name="Wattam A.R."/>
            <person name="Will R."/>
            <person name="Williams K."/>
            <person name="Yoo H."/>
            <person name="Bruce D."/>
            <person name="Detter C."/>
            <person name="Munk C."/>
            <person name="Brettin T.S."/>
        </authorList>
    </citation>
    <scope>NUCLEOTIDE SEQUENCE [LARGE SCALE GENOMIC DNA]</scope>
    <source>
        <strain>ATCC 23365 / NCTC 10854 / RM-666</strain>
    </source>
</reference>
<proteinExistence type="inferred from homology"/>
<sequence>MLMFLTHFAEHVTPFNVFRYITFRTGGAMITSALIVFLFGPTIINSLRVRQGKGQPIRADGPQTHFKKAGTPTMGGLMIMTGILASCLLWANLASVYVWVVLMVSVGFGAIGFYDDYLKVTKQSDKGFSGKARLGIEFLIAAIAAFTIMRAGQEPFSSSLTFPFVKQLVINLSWFFIPFAAFVMVGAGNAVNLTDGLDGLAIVPVMVAAASFGFIAYLSGNAIFADYLQIHFVPGTGELAVVLGAVIGAGLGFLWFNAPPAAIFMGDTGSLALGGMLGTVAVATKHEIVLAIIGGLFVMEALSVIIQVGFFKMTGRRVFLMAPIHHHFEKKGWTESQVVIRFWIVAIILAMIGLSTLKLR</sequence>
<comment type="function">
    <text evidence="1">Catalyzes the initial step of the lipid cycle reactions in the biosynthesis of the cell wall peptidoglycan: transfers peptidoglycan precursor phospho-MurNAc-pentapeptide from UDP-MurNAc-pentapeptide onto the lipid carrier undecaprenyl phosphate, yielding undecaprenyl-pyrophosphoryl-MurNAc-pentapeptide, known as lipid I.</text>
</comment>
<comment type="catalytic activity">
    <reaction evidence="1">
        <text>UDP-N-acetyl-alpha-D-muramoyl-L-alanyl-gamma-D-glutamyl-meso-2,6-diaminopimeloyl-D-alanyl-D-alanine + di-trans,octa-cis-undecaprenyl phosphate = di-trans,octa-cis-undecaprenyl diphospho-N-acetyl-alpha-D-muramoyl-L-alanyl-D-glutamyl-meso-2,6-diaminopimeloyl-D-alanyl-D-alanine + UMP</text>
        <dbReference type="Rhea" id="RHEA:28386"/>
        <dbReference type="ChEBI" id="CHEBI:57865"/>
        <dbReference type="ChEBI" id="CHEBI:60392"/>
        <dbReference type="ChEBI" id="CHEBI:61386"/>
        <dbReference type="ChEBI" id="CHEBI:61387"/>
        <dbReference type="EC" id="2.7.8.13"/>
    </reaction>
</comment>
<comment type="cofactor">
    <cofactor evidence="1">
        <name>Mg(2+)</name>
        <dbReference type="ChEBI" id="CHEBI:18420"/>
    </cofactor>
</comment>
<comment type="pathway">
    <text evidence="1">Cell wall biogenesis; peptidoglycan biosynthesis.</text>
</comment>
<comment type="subcellular location">
    <subcellularLocation>
        <location evidence="1">Cell inner membrane</location>
        <topology evidence="1">Multi-pass membrane protein</topology>
    </subcellularLocation>
</comment>
<comment type="similarity">
    <text evidence="1">Belongs to the glycosyltransferase 4 family. MraY subfamily.</text>
</comment>
<organism>
    <name type="scientific">Brucella canis (strain ATCC 23365 / NCTC 10854 / RM-666)</name>
    <dbReference type="NCBI Taxonomy" id="483179"/>
    <lineage>
        <taxon>Bacteria</taxon>
        <taxon>Pseudomonadati</taxon>
        <taxon>Pseudomonadota</taxon>
        <taxon>Alphaproteobacteria</taxon>
        <taxon>Hyphomicrobiales</taxon>
        <taxon>Brucellaceae</taxon>
        <taxon>Brucella/Ochrobactrum group</taxon>
        <taxon>Brucella</taxon>
    </lineage>
</organism>
<protein>
    <recommendedName>
        <fullName evidence="1">Phospho-N-acetylmuramoyl-pentapeptide-transferase</fullName>
        <ecNumber evidence="1">2.7.8.13</ecNumber>
    </recommendedName>
    <alternativeName>
        <fullName evidence="1">UDP-MurNAc-pentapeptide phosphotransferase</fullName>
    </alternativeName>
</protein>
<feature type="chain" id="PRO_1000074534" description="Phospho-N-acetylmuramoyl-pentapeptide-transferase">
    <location>
        <begin position="1"/>
        <end position="360"/>
    </location>
</feature>
<feature type="transmembrane region" description="Helical" evidence="1">
    <location>
        <begin position="27"/>
        <end position="47"/>
    </location>
</feature>
<feature type="transmembrane region" description="Helical" evidence="1">
    <location>
        <begin position="71"/>
        <end position="91"/>
    </location>
</feature>
<feature type="transmembrane region" description="Helical" evidence="1">
    <location>
        <begin position="93"/>
        <end position="113"/>
    </location>
</feature>
<feature type="transmembrane region" description="Helical" evidence="1">
    <location>
        <begin position="128"/>
        <end position="148"/>
    </location>
</feature>
<feature type="transmembrane region" description="Helical" evidence="1">
    <location>
        <begin position="168"/>
        <end position="188"/>
    </location>
</feature>
<feature type="transmembrane region" description="Helical" evidence="1">
    <location>
        <begin position="199"/>
        <end position="219"/>
    </location>
</feature>
<feature type="transmembrane region" description="Helical" evidence="1">
    <location>
        <begin position="239"/>
        <end position="259"/>
    </location>
</feature>
<feature type="transmembrane region" description="Helical" evidence="1">
    <location>
        <begin position="262"/>
        <end position="282"/>
    </location>
</feature>
<feature type="transmembrane region" description="Helical" evidence="1">
    <location>
        <begin position="288"/>
        <end position="308"/>
    </location>
</feature>
<feature type="transmembrane region" description="Helical" evidence="1">
    <location>
        <begin position="337"/>
        <end position="357"/>
    </location>
</feature>